<gene>
    <name evidence="1" type="primary">yebF</name>
    <name type="ordered locus">SCH_1886</name>
</gene>
<accession>Q57NB9</accession>
<keyword id="KW-1015">Disulfide bond</keyword>
<keyword id="KW-0964">Secreted</keyword>
<keyword id="KW-0732">Signal</keyword>
<evidence type="ECO:0000255" key="1">
    <source>
        <dbReference type="HAMAP-Rule" id="MF_01435"/>
    </source>
</evidence>
<evidence type="ECO:0000255" key="2">
    <source>
        <dbReference type="PROSITE-ProRule" id="PRU01323"/>
    </source>
</evidence>
<protein>
    <recommendedName>
        <fullName evidence="1">Protein YebF</fullName>
    </recommendedName>
</protein>
<organism>
    <name type="scientific">Salmonella choleraesuis (strain SC-B67)</name>
    <dbReference type="NCBI Taxonomy" id="321314"/>
    <lineage>
        <taxon>Bacteria</taxon>
        <taxon>Pseudomonadati</taxon>
        <taxon>Pseudomonadota</taxon>
        <taxon>Gammaproteobacteria</taxon>
        <taxon>Enterobacterales</taxon>
        <taxon>Enterobacteriaceae</taxon>
        <taxon>Salmonella</taxon>
    </lineage>
</organism>
<dbReference type="EMBL" id="AE017220">
    <property type="protein sequence ID" value="AAX65792.1"/>
    <property type="molecule type" value="Genomic_DNA"/>
</dbReference>
<dbReference type="RefSeq" id="WP_001042123.1">
    <property type="nucleotide sequence ID" value="NC_006905.1"/>
</dbReference>
<dbReference type="SMR" id="Q57NB9"/>
<dbReference type="KEGG" id="sec:SCH_1886"/>
<dbReference type="HOGENOM" id="CLU_161319_1_0_6"/>
<dbReference type="Proteomes" id="UP000000538">
    <property type="component" value="Chromosome"/>
</dbReference>
<dbReference type="GO" id="GO:0005576">
    <property type="term" value="C:extracellular region"/>
    <property type="evidence" value="ECO:0007669"/>
    <property type="project" value="UniProtKB-SubCell"/>
</dbReference>
<dbReference type="Gene3D" id="3.10.450.300">
    <property type="entry name" value="YebF/Colicin-M immunity protein"/>
    <property type="match status" value="1"/>
</dbReference>
<dbReference type="HAMAP" id="MF_01435">
    <property type="entry name" value="YebF"/>
    <property type="match status" value="1"/>
</dbReference>
<dbReference type="InterPro" id="IPR020236">
    <property type="entry name" value="Uncharacterised_YebF"/>
</dbReference>
<dbReference type="InterPro" id="IPR038703">
    <property type="entry name" value="YebF/Cmi_sf"/>
</dbReference>
<dbReference type="InterPro" id="IPR025603">
    <property type="entry name" value="YebF/ColM_immunity"/>
</dbReference>
<dbReference type="NCBIfam" id="NF010224">
    <property type="entry name" value="PRK13680.1"/>
    <property type="match status" value="1"/>
</dbReference>
<dbReference type="NCBIfam" id="NF041240">
    <property type="entry name" value="YebF_not_Cmi"/>
    <property type="match status" value="1"/>
</dbReference>
<dbReference type="Pfam" id="PF13995">
    <property type="entry name" value="YebF"/>
    <property type="match status" value="1"/>
</dbReference>
<dbReference type="PROSITE" id="PS51979">
    <property type="entry name" value="YEBF_CMI"/>
    <property type="match status" value="1"/>
</dbReference>
<proteinExistence type="inferred from homology"/>
<sequence>MNKRGALLSLLLLSASVSAFAASTESKSVKFPQCEGLDAAGIAASVKRDYQQNRIVRWADDQKKVGQADPVAWVNVQDVVGQNDKWTVPLTVRGKSADIHYQVIVDCKAGKAEYKPR</sequence>
<comment type="subcellular location">
    <subcellularLocation>
        <location evidence="1">Secreted</location>
    </subcellularLocation>
</comment>
<comment type="similarity">
    <text evidence="1">Belongs to the YebF family.</text>
</comment>
<feature type="signal peptide" evidence="1">
    <location>
        <begin position="1"/>
        <end position="21"/>
    </location>
</feature>
<feature type="chain" id="PRO_0000045950" description="Protein YebF">
    <location>
        <begin position="22"/>
        <end position="117"/>
    </location>
</feature>
<feature type="domain" description="YebF/Cmi" evidence="2">
    <location>
        <begin position="30"/>
        <end position="117"/>
    </location>
</feature>
<feature type="disulfide bond" evidence="2">
    <location>
        <begin position="34"/>
        <end position="107"/>
    </location>
</feature>
<reference key="1">
    <citation type="journal article" date="2005" name="Nucleic Acids Res.">
        <title>The genome sequence of Salmonella enterica serovar Choleraesuis, a highly invasive and resistant zoonotic pathogen.</title>
        <authorList>
            <person name="Chiu C.-H."/>
            <person name="Tang P."/>
            <person name="Chu C."/>
            <person name="Hu S."/>
            <person name="Bao Q."/>
            <person name="Yu J."/>
            <person name="Chou Y.-Y."/>
            <person name="Wang H.-S."/>
            <person name="Lee Y.-S."/>
        </authorList>
    </citation>
    <scope>NUCLEOTIDE SEQUENCE [LARGE SCALE GENOMIC DNA]</scope>
    <source>
        <strain>SC-B67</strain>
    </source>
</reference>
<name>YEBF_SALCH</name>